<evidence type="ECO:0000255" key="1"/>
<evidence type="ECO:0000269" key="2">
    <source>
    </source>
</evidence>
<evidence type="ECO:0000269" key="3">
    <source>
    </source>
</evidence>
<evidence type="ECO:0000269" key="4">
    <source>
    </source>
</evidence>
<evidence type="ECO:0000303" key="5">
    <source>
    </source>
</evidence>
<evidence type="ECO:0000303" key="6">
    <source>
    </source>
</evidence>
<evidence type="ECO:0000305" key="7"/>
<evidence type="ECO:0000305" key="8">
    <source>
    </source>
</evidence>
<protein>
    <recommendedName>
        <fullName evidence="5">Gentisate 1,2 dioxygenase 1</fullName>
        <shortName evidence="6">GDOI</shortName>
        <ecNumber evidence="2 4">1.13.11.4</ecNumber>
    </recommendedName>
</protein>
<name>GDO1_AQUAC</name>
<gene>
    <name evidence="6" type="primary">xlnE</name>
</gene>
<keyword id="KW-0058">Aromatic hydrocarbons catabolism</keyword>
<keyword id="KW-0223">Dioxygenase</keyword>
<keyword id="KW-0903">Direct protein sequencing</keyword>
<keyword id="KW-0408">Iron</keyword>
<keyword id="KW-0560">Oxidoreductase</keyword>
<accession>Q9S3U6</accession>
<comment type="function">
    <text evidence="2 4">Involved in the degradation of gentisate (PubMed:10049846). Catalyzes the conversion of gentisate (2,5-dihydroxybenzoate) to maleylpyruvate. Exhibits broad substrate specificities towards alkyl and halogenated gentisates (PubMed:10049846, PubMed:16237038).</text>
</comment>
<comment type="catalytic activity">
    <reaction evidence="2 4">
        <text>2,5-dihydroxybenzoate + O2 = 3-maleylpyruvate + H(+)</text>
        <dbReference type="Rhea" id="RHEA:18237"/>
        <dbReference type="ChEBI" id="CHEBI:15378"/>
        <dbReference type="ChEBI" id="CHEBI:15379"/>
        <dbReference type="ChEBI" id="CHEBI:16727"/>
        <dbReference type="ChEBI" id="CHEBI:58044"/>
        <dbReference type="EC" id="1.13.11.4"/>
    </reaction>
    <physiologicalReaction direction="left-to-right" evidence="2 4">
        <dbReference type="Rhea" id="RHEA:18238"/>
    </physiologicalReaction>
</comment>
<comment type="cofactor">
    <cofactor evidence="8">
        <name>Fe(2+)</name>
        <dbReference type="ChEBI" id="CHEBI:29033"/>
    </cofactor>
</comment>
<comment type="activity regulation">
    <text evidence="2">Completely inhibited by the presence of 5 mM Cu(2+). Partially inhibited with 5 mM Mn(2+), Zn(2+) or EDTA.</text>
</comment>
<comment type="biophysicochemical properties">
    <kinetics>
        <KM evidence="2">92 uM for gentisate</KM>
        <KM evidence="4">86.02 uM for gentisate</KM>
        <KM evidence="2">76 uM for 3-methylgentisate</KM>
        <KM evidence="4">62.34 uM for 3-methylgentisate</KM>
        <KM evidence="2">15 uM for 3-bromogentisate</KM>
        <KM evidence="4">45.91 uM for 3-bromogentisate</KM>
        <KM evidence="2">53 uM for 3-isopropylgentisate</KM>
        <KM evidence="4">79.37 uM for 3-isopropylgentisate</KM>
        <KM evidence="4">76.69 uM for 3-fluorogentisate</KM>
        <KM evidence="4">23.26 uM for 4-chlorogentisate</KM>
        <KM evidence="4">74.26 uM for 4-methylgentisate</KM>
        <text evidence="2">kcat is 2433 min(-1) with gentisate as substrate. kcat is 3098 min(-1) with 3-methylgentisate as substrate. kcat is 613 min(-1) with 3-bromogentisate as substrate. kcat is 1573 min(-1) with 3-isopropylgentisate as substrate.</text>
    </kinetics>
    <phDependence>
        <text evidence="2">Optimum pH is around 8.0.</text>
    </phDependence>
    <temperatureDependence>
        <text evidence="2">Optimum temperature is 50 degrees Celsius.</text>
    </temperatureDependence>
</comment>
<comment type="subunit">
    <text evidence="2">Homotetramer.</text>
</comment>
<comment type="induction">
    <text evidence="3">Shows relatively high basal levels of expression under non-inducing conditions. Induced by aromatic substrates, especially 3-hydroxybenzoate.</text>
</comment>
<comment type="disruption phenotype">
    <text evidence="3">Knockout mutant can still grow on minimal agar plates containing gentisate as the sole carbon source but GDO activity cannot be detected in uninduced cells.</text>
</comment>
<comment type="similarity">
    <text evidence="7">Belongs to the gentisate 1,2-dioxygenase family.</text>
</comment>
<sequence>MSFTEKPAVTKERKEFYSKLESHDLAPLWEVLNEVVTTKPKSNCAPHLWEFEVAKEFLMEAGTLITAKEAERRVLILENPGLKGLSRITTSLYAGLQLILPGEVAPTHRHSQSALRFVVDGGGACTSVDGERTTMQVGDFVITPPWAWHDHVNDSDKPMIWMDGLDLPMVTLFDTSFAEGYGEDIQEITRPNGDSLARYGANMLPVDFKQKGLSSPIFNYPYERSREALEAMKKANEWDPCHGLKMQYINPLDGMAAMPTISSFIQLLPKEFRTQTYRSTDATVFSVIEGQGKTRIGDKVFFWKAKDTFVVPSWYPVEHEASSDAVLFSYSDRVAQQKLGFWRESRN</sequence>
<organism>
    <name type="scientific">Aquipseudomonas alcaligenes</name>
    <name type="common">Pseudomonas alcaligenes</name>
    <dbReference type="NCBI Taxonomy" id="43263"/>
    <lineage>
        <taxon>Bacteria</taxon>
        <taxon>Pseudomonadati</taxon>
        <taxon>Pseudomonadota</taxon>
        <taxon>Gammaproteobacteria</taxon>
        <taxon>Pseudomonadales</taxon>
        <taxon>Pseudomonadaceae</taxon>
        <taxon>Aquipseudomonas</taxon>
    </lineage>
</organism>
<reference key="1">
    <citation type="journal article" date="2003" name="Gene">
        <title>Molecular characterization of an inducible gentisate 1,2-dioxygenase gene, xlnE, from Pseudomonas alcaligenes NCIMB 9867.</title>
        <authorList>
            <person name="Yeo C.C."/>
            <person name="Wong M.V.-M."/>
            <person name="Feng Y."/>
            <person name="Song K.P."/>
            <person name="Poh C.L."/>
        </authorList>
    </citation>
    <scope>NUCLEOTIDE SEQUENCE [GENOMIC DNA]</scope>
    <scope>INDUCTION</scope>
    <scope>DISRUPTION PHENOTYPE</scope>
    <source>
        <strain>NCIMB 9867 / P25X</strain>
    </source>
</reference>
<reference key="2">
    <citation type="journal article" date="1999" name="Appl. Environ. Microbiol.">
        <title>Purification and characterization of gentisate 1,2-dioxygenases from Pseudomonas alcaligenes NCIB 9867 and Pseudomonas putida NCIB 9869.</title>
        <authorList>
            <person name="Feng Y."/>
            <person name="Khoo H.E."/>
            <person name="Poh C.L."/>
        </authorList>
    </citation>
    <scope>PROTEIN SEQUENCE OF 2-26</scope>
    <scope>FUNCTION</scope>
    <scope>CATALYTIC ACTIVITY</scope>
    <scope>COFACTOR</scope>
    <scope>ACTIVITY REGULATION</scope>
    <scope>BIOPHYSICOCHEMICAL PROPERTIES</scope>
    <scope>SUBUNIT</scope>
    <source>
        <strain>NCIMB 9867 / P25X</strain>
    </source>
</reference>
<reference key="3">
    <citation type="journal article" date="2005" name="J. Bacteriol.">
        <title>Replacement of tyrosine 181 by phenylalanine in gentisate 1,2-dioxygenase I from Pseudomonas alcaligenes NCIMB 9867 enhances catalytic activities.</title>
        <authorList>
            <person name="Tan C.L."/>
            <person name="Yeo C.C."/>
            <person name="Khoo H.E."/>
            <person name="Poh C.L."/>
        </authorList>
    </citation>
    <scope>FUNCTION</scope>
    <scope>CATALYTIC ACTIVITY</scope>
    <scope>BIOPHYSICOCHEMICAL PROPERTIES</scope>
    <scope>MUTAGENESIS OF TYR-17; VAL-36; ASN-43; SER-113; ASP-120; GLY-123; TRP-146; ASN-153; GLY-164; MET-169; TYR-181; GLU-223; THR-260; VAL-284; VAL-326 AND LYS-338</scope>
</reference>
<proteinExistence type="evidence at protein level"/>
<dbReference type="EC" id="1.13.11.4" evidence="2 4"/>
<dbReference type="EMBL" id="AF173167">
    <property type="protein sequence ID" value="AAD49427.1"/>
    <property type="molecule type" value="Genomic_DNA"/>
</dbReference>
<dbReference type="SMR" id="Q9S3U6"/>
<dbReference type="BioCyc" id="MetaCyc:MONOMER-18566"/>
<dbReference type="SABIO-RK" id="Q9S3U6"/>
<dbReference type="GO" id="GO:0047922">
    <property type="term" value="F:gentisate 1,2-dioxygenase activity"/>
    <property type="evidence" value="ECO:0007669"/>
    <property type="project" value="UniProtKB-EC"/>
</dbReference>
<dbReference type="GO" id="GO:0009056">
    <property type="term" value="P:catabolic process"/>
    <property type="evidence" value="ECO:0007669"/>
    <property type="project" value="UniProtKB-KW"/>
</dbReference>
<dbReference type="CDD" id="cd06992">
    <property type="entry name" value="cupin_GDO-like_C"/>
    <property type="match status" value="1"/>
</dbReference>
<dbReference type="CDD" id="cd02216">
    <property type="entry name" value="cupin_GDO-like_N"/>
    <property type="match status" value="1"/>
</dbReference>
<dbReference type="Gene3D" id="2.60.120.10">
    <property type="entry name" value="Jelly Rolls"/>
    <property type="match status" value="1"/>
</dbReference>
<dbReference type="InterPro" id="IPR013096">
    <property type="entry name" value="Cupin_2"/>
</dbReference>
<dbReference type="InterPro" id="IPR047183">
    <property type="entry name" value="GDO-like"/>
</dbReference>
<dbReference type="InterPro" id="IPR011960">
    <property type="entry name" value="Gentisate_dOase"/>
</dbReference>
<dbReference type="InterPro" id="IPR014710">
    <property type="entry name" value="RmlC-like_jellyroll"/>
</dbReference>
<dbReference type="InterPro" id="IPR011051">
    <property type="entry name" value="RmlC_Cupin_sf"/>
</dbReference>
<dbReference type="NCBIfam" id="TIGR02272">
    <property type="entry name" value="gentisate_1_2"/>
    <property type="match status" value="1"/>
</dbReference>
<dbReference type="PANTHER" id="PTHR41517">
    <property type="entry name" value="1,2-DIOXYGENASE PROTEIN-RELATED"/>
    <property type="match status" value="1"/>
</dbReference>
<dbReference type="PANTHER" id="PTHR41517:SF1">
    <property type="entry name" value="CUPIN"/>
    <property type="match status" value="1"/>
</dbReference>
<dbReference type="Pfam" id="PF07883">
    <property type="entry name" value="Cupin_2"/>
    <property type="match status" value="1"/>
</dbReference>
<dbReference type="SUPFAM" id="SSF51182">
    <property type="entry name" value="RmlC-like cupins"/>
    <property type="match status" value="1"/>
</dbReference>
<feature type="initiator methionine" description="Removed" evidence="2">
    <location>
        <position position="1"/>
    </location>
</feature>
<feature type="chain" id="PRO_0000452280" description="Gentisate 1,2 dioxygenase 1">
    <location>
        <begin position="2"/>
        <end position="347"/>
    </location>
</feature>
<feature type="domain" description="Cupin type-2" evidence="1">
    <location>
        <begin position="96"/>
        <end position="163"/>
    </location>
</feature>
<feature type="mutagenesis site" description="1.6-fold increase in relative activity towards gentisate." evidence="4">
    <original>Y</original>
    <variation>C</variation>
    <location>
        <position position="17"/>
    </location>
</feature>
<feature type="mutagenesis site" description="Loss of activity." evidence="4">
    <original>V</original>
    <variation>A</variation>
    <location>
        <position position="36"/>
    </location>
</feature>
<feature type="mutagenesis site" description="3.2-fold increase in relative activity towards gentisate." evidence="4">
    <original>N</original>
    <variation>T</variation>
    <location>
        <position position="43"/>
    </location>
</feature>
<feature type="mutagenesis site" description="Loss of activity." evidence="4">
    <original>S</original>
    <variation>P</variation>
    <location>
        <position position="113"/>
    </location>
</feature>
<feature type="mutagenesis site" description="Loss of activity." evidence="4">
    <original>D</original>
    <variation>K</variation>
    <location>
        <position position="120"/>
    </location>
</feature>
<feature type="mutagenesis site" description="25% decrease in activity." evidence="4">
    <original>G</original>
    <variation>N</variation>
    <location>
        <position position="123"/>
    </location>
</feature>
<feature type="mutagenesis site" description="Loss of activity." evidence="4">
    <original>W</original>
    <variation>T</variation>
    <location>
        <position position="146"/>
    </location>
</feature>
<feature type="mutagenesis site" description="1.8-fold increase in relative activity towards gentisate." evidence="4">
    <original>N</original>
    <variation>H</variation>
    <location>
        <position position="153"/>
    </location>
</feature>
<feature type="mutagenesis site" description="Loss of activity." evidence="4">
    <original>G</original>
    <variation>T</variation>
    <location>
        <position position="164"/>
    </location>
</feature>
<feature type="mutagenesis site" description="Loss of activity." evidence="4">
    <original>M</original>
    <variation>H</variation>
    <location>
        <position position="169"/>
    </location>
</feature>
<feature type="mutagenesis site" description="Does not improve specific activity towards gentisate." evidence="4">
    <original>Y</original>
    <variation>D</variation>
    <variation>H</variation>
    <location>
        <position position="181"/>
    </location>
</feature>
<feature type="mutagenesis site" description="4.6-fold increase in relative activity towards gentisate. Also increases relative activities towards 3-methyl-, 4-methyl-, 3-bromo- and 3-fluorogentisates." evidence="4">
    <original>Y</original>
    <variation>F</variation>
    <location>
        <position position="181"/>
    </location>
</feature>
<feature type="mutagenesis site" description="No change in relative activity towards gentisate." evidence="4">
    <original>E</original>
    <variation>A</variation>
    <location>
        <position position="223"/>
    </location>
</feature>
<feature type="mutagenesis site" description="Loss of activity." evidence="4">
    <original>T</original>
    <variation>C</variation>
    <location>
        <position position="260"/>
    </location>
</feature>
<feature type="mutagenesis site" description="2.6-fold increase in relative activity towards gentisate." evidence="4">
    <original>V</original>
    <variation>I</variation>
    <location>
        <position position="284"/>
    </location>
</feature>
<feature type="mutagenesis site" description="Loss of activity." evidence="4">
    <original>V</original>
    <variation>Q</variation>
    <location>
        <position position="326"/>
    </location>
</feature>
<feature type="mutagenesis site" description="1.5-fold increase in relative activity towards gentisate." evidence="4">
    <original>K</original>
    <variation>Y</variation>
    <location>
        <position position="338"/>
    </location>
</feature>
<feature type="sequence conflict" description="In Ref. 2; AA sequence." evidence="7" ref="2">
    <original>S</original>
    <variation>C</variation>
    <location>
        <position position="22"/>
    </location>
</feature>